<sequence length="128" mass="12595">MGIPLRIDARSTALVAVGGAVGAVLRYTVAQAIAGPLGTLAANAAGSLALGALAYEAAATDSVLSADAHTLLGTGCLSAFTTYSTFAVQTAGLAPRWMAANVATTYALGFAGVLVGRAIAATARGDRR</sequence>
<keyword id="KW-1003">Cell membrane</keyword>
<keyword id="KW-0407">Ion channel</keyword>
<keyword id="KW-0406">Ion transport</keyword>
<keyword id="KW-0472">Membrane</keyword>
<keyword id="KW-1185">Reference proteome</keyword>
<keyword id="KW-0812">Transmembrane</keyword>
<keyword id="KW-1133">Transmembrane helix</keyword>
<keyword id="KW-0813">Transport</keyword>
<gene>
    <name evidence="1" type="primary">fluC2</name>
    <name evidence="1" type="synonym">crcB2</name>
    <name type="ordered locus">VNG_1921H</name>
</gene>
<evidence type="ECO:0000255" key="1">
    <source>
        <dbReference type="HAMAP-Rule" id="MF_00454"/>
    </source>
</evidence>
<organism>
    <name type="scientific">Halobacterium salinarum (strain ATCC 700922 / JCM 11081 / NRC-1)</name>
    <name type="common">Halobacterium halobium</name>
    <dbReference type="NCBI Taxonomy" id="64091"/>
    <lineage>
        <taxon>Archaea</taxon>
        <taxon>Methanobacteriati</taxon>
        <taxon>Methanobacteriota</taxon>
        <taxon>Stenosarchaea group</taxon>
        <taxon>Halobacteria</taxon>
        <taxon>Halobacteriales</taxon>
        <taxon>Halobacteriaceae</taxon>
        <taxon>Halobacterium</taxon>
        <taxon>Halobacterium salinarum NRC-34001</taxon>
    </lineage>
</organism>
<feature type="chain" id="PRO_0000110224" description="Fluoride-specific ion channel FluC 2">
    <location>
        <begin position="1"/>
        <end position="128"/>
    </location>
</feature>
<feature type="transmembrane region" description="Helical" evidence="1">
    <location>
        <begin position="13"/>
        <end position="35"/>
    </location>
</feature>
<feature type="transmembrane region" description="Helical" evidence="1">
    <location>
        <begin position="40"/>
        <end position="59"/>
    </location>
</feature>
<feature type="transmembrane region" description="Helical" evidence="1">
    <location>
        <begin position="71"/>
        <end position="93"/>
    </location>
</feature>
<feature type="transmembrane region" description="Helical" evidence="1">
    <location>
        <begin position="97"/>
        <end position="119"/>
    </location>
</feature>
<proteinExistence type="inferred from homology"/>
<accession>Q9HNW1</accession>
<name>FLUC2_HALSA</name>
<dbReference type="EMBL" id="AE004437">
    <property type="protein sequence ID" value="AAG20109.1"/>
    <property type="molecule type" value="Genomic_DNA"/>
</dbReference>
<dbReference type="PIR" id="A84343">
    <property type="entry name" value="A84343"/>
</dbReference>
<dbReference type="RefSeq" id="WP_010903409.1">
    <property type="nucleotide sequence ID" value="NC_002607.1"/>
</dbReference>
<dbReference type="SMR" id="Q9HNW1"/>
<dbReference type="STRING" id="64091.VNG_1921H"/>
<dbReference type="PaxDb" id="64091-VNG_1921H"/>
<dbReference type="KEGG" id="hal:VNG_1921H"/>
<dbReference type="PATRIC" id="fig|64091.14.peg.1468"/>
<dbReference type="HOGENOM" id="CLU_114342_1_4_2"/>
<dbReference type="InParanoid" id="Q9HNW1"/>
<dbReference type="OrthoDB" id="253428at2157"/>
<dbReference type="Proteomes" id="UP000000554">
    <property type="component" value="Chromosome"/>
</dbReference>
<dbReference type="GO" id="GO:0005886">
    <property type="term" value="C:plasma membrane"/>
    <property type="evidence" value="ECO:0000318"/>
    <property type="project" value="GO_Central"/>
</dbReference>
<dbReference type="GO" id="GO:0062054">
    <property type="term" value="F:fluoride channel activity"/>
    <property type="evidence" value="ECO:0007669"/>
    <property type="project" value="UniProtKB-UniRule"/>
</dbReference>
<dbReference type="GO" id="GO:1903425">
    <property type="term" value="F:fluoride transmembrane transporter activity"/>
    <property type="evidence" value="ECO:0000318"/>
    <property type="project" value="GO_Central"/>
</dbReference>
<dbReference type="GO" id="GO:0140114">
    <property type="term" value="P:cellular detoxification of fluoride"/>
    <property type="evidence" value="ECO:0007669"/>
    <property type="project" value="UniProtKB-UniRule"/>
</dbReference>
<dbReference type="GO" id="GO:1903424">
    <property type="term" value="P:fluoride transmembrane transport"/>
    <property type="evidence" value="ECO:0000318"/>
    <property type="project" value="GO_Central"/>
</dbReference>
<dbReference type="HAMAP" id="MF_00454">
    <property type="entry name" value="FluC"/>
    <property type="match status" value="1"/>
</dbReference>
<dbReference type="InterPro" id="IPR003691">
    <property type="entry name" value="FluC"/>
</dbReference>
<dbReference type="PANTHER" id="PTHR28259">
    <property type="entry name" value="FLUORIDE EXPORT PROTEIN 1-RELATED"/>
    <property type="match status" value="1"/>
</dbReference>
<dbReference type="PANTHER" id="PTHR28259:SF1">
    <property type="entry name" value="FLUORIDE EXPORT PROTEIN 1-RELATED"/>
    <property type="match status" value="1"/>
</dbReference>
<dbReference type="Pfam" id="PF02537">
    <property type="entry name" value="CRCB"/>
    <property type="match status" value="1"/>
</dbReference>
<comment type="function">
    <text evidence="1">Fluoride-specific ion channel. Important for reducing fluoride concentration in the cell, thus reducing its toxicity.</text>
</comment>
<comment type="catalytic activity">
    <reaction evidence="1">
        <text>fluoride(in) = fluoride(out)</text>
        <dbReference type="Rhea" id="RHEA:76159"/>
        <dbReference type="ChEBI" id="CHEBI:17051"/>
    </reaction>
    <physiologicalReaction direction="left-to-right" evidence="1">
        <dbReference type="Rhea" id="RHEA:76160"/>
    </physiologicalReaction>
</comment>
<comment type="subcellular location">
    <subcellularLocation>
        <location evidence="1">Cell membrane</location>
        <topology evidence="1">Multi-pass membrane protein</topology>
    </subcellularLocation>
</comment>
<comment type="similarity">
    <text evidence="1">Belongs to the fluoride channel Fluc/FEX (TC 1.A.43) family.</text>
</comment>
<reference key="1">
    <citation type="journal article" date="2000" name="Proc. Natl. Acad. Sci. U.S.A.">
        <title>Genome sequence of Halobacterium species NRC-1.</title>
        <authorList>
            <person name="Ng W.V."/>
            <person name="Kennedy S.P."/>
            <person name="Mahairas G.G."/>
            <person name="Berquist B."/>
            <person name="Pan M."/>
            <person name="Shukla H.D."/>
            <person name="Lasky S.R."/>
            <person name="Baliga N.S."/>
            <person name="Thorsson V."/>
            <person name="Sbrogna J."/>
            <person name="Swartzell S."/>
            <person name="Weir D."/>
            <person name="Hall J."/>
            <person name="Dahl T.A."/>
            <person name="Welti R."/>
            <person name="Goo Y.A."/>
            <person name="Leithauser B."/>
            <person name="Keller K."/>
            <person name="Cruz R."/>
            <person name="Danson M.J."/>
            <person name="Hough D.W."/>
            <person name="Maddocks D.G."/>
            <person name="Jablonski P.E."/>
            <person name="Krebs M.P."/>
            <person name="Angevine C.M."/>
            <person name="Dale H."/>
            <person name="Isenbarger T.A."/>
            <person name="Peck R.F."/>
            <person name="Pohlschroder M."/>
            <person name="Spudich J.L."/>
            <person name="Jung K.-H."/>
            <person name="Alam M."/>
            <person name="Freitas T."/>
            <person name="Hou S."/>
            <person name="Daniels C.J."/>
            <person name="Dennis P.P."/>
            <person name="Omer A.D."/>
            <person name="Ebhardt H."/>
            <person name="Lowe T.M."/>
            <person name="Liang P."/>
            <person name="Riley M."/>
            <person name="Hood L."/>
            <person name="DasSarma S."/>
        </authorList>
    </citation>
    <scope>NUCLEOTIDE SEQUENCE [LARGE SCALE GENOMIC DNA]</scope>
    <source>
        <strain>ATCC 700922 / JCM 11081 / NRC-1</strain>
    </source>
</reference>
<protein>
    <recommendedName>
        <fullName evidence="1">Fluoride-specific ion channel FluC 2</fullName>
    </recommendedName>
</protein>